<dbReference type="EC" id="4.98.1.1" evidence="1"/>
<dbReference type="EMBL" id="CP000250">
    <property type="protein sequence ID" value="ABD09225.1"/>
    <property type="molecule type" value="Genomic_DNA"/>
</dbReference>
<dbReference type="RefSeq" id="WP_011443408.1">
    <property type="nucleotide sequence ID" value="NC_007778.1"/>
</dbReference>
<dbReference type="SMR" id="Q2IRD5"/>
<dbReference type="STRING" id="316058.RPB_4542"/>
<dbReference type="KEGG" id="rpb:RPB_4542"/>
<dbReference type="eggNOG" id="COG0276">
    <property type="taxonomic scope" value="Bacteria"/>
</dbReference>
<dbReference type="HOGENOM" id="CLU_018884_0_0_5"/>
<dbReference type="OrthoDB" id="9809741at2"/>
<dbReference type="UniPathway" id="UPA00252">
    <property type="reaction ID" value="UER00325"/>
</dbReference>
<dbReference type="Proteomes" id="UP000008809">
    <property type="component" value="Chromosome"/>
</dbReference>
<dbReference type="GO" id="GO:0005737">
    <property type="term" value="C:cytoplasm"/>
    <property type="evidence" value="ECO:0007669"/>
    <property type="project" value="UniProtKB-SubCell"/>
</dbReference>
<dbReference type="GO" id="GO:0004325">
    <property type="term" value="F:ferrochelatase activity"/>
    <property type="evidence" value="ECO:0007669"/>
    <property type="project" value="UniProtKB-UniRule"/>
</dbReference>
<dbReference type="GO" id="GO:0046872">
    <property type="term" value="F:metal ion binding"/>
    <property type="evidence" value="ECO:0007669"/>
    <property type="project" value="UniProtKB-KW"/>
</dbReference>
<dbReference type="GO" id="GO:0006783">
    <property type="term" value="P:heme biosynthetic process"/>
    <property type="evidence" value="ECO:0007669"/>
    <property type="project" value="UniProtKB-UniRule"/>
</dbReference>
<dbReference type="CDD" id="cd00419">
    <property type="entry name" value="Ferrochelatase_C"/>
    <property type="match status" value="1"/>
</dbReference>
<dbReference type="CDD" id="cd03411">
    <property type="entry name" value="Ferrochelatase_N"/>
    <property type="match status" value="1"/>
</dbReference>
<dbReference type="FunFam" id="3.40.50.1400:FF:000002">
    <property type="entry name" value="Ferrochelatase"/>
    <property type="match status" value="1"/>
</dbReference>
<dbReference type="Gene3D" id="3.40.50.1400">
    <property type="match status" value="2"/>
</dbReference>
<dbReference type="HAMAP" id="MF_00323">
    <property type="entry name" value="Ferrochelatase"/>
    <property type="match status" value="1"/>
</dbReference>
<dbReference type="InterPro" id="IPR001015">
    <property type="entry name" value="Ferrochelatase"/>
</dbReference>
<dbReference type="InterPro" id="IPR019772">
    <property type="entry name" value="Ferrochelatase_AS"/>
</dbReference>
<dbReference type="InterPro" id="IPR033644">
    <property type="entry name" value="Ferrochelatase_C"/>
</dbReference>
<dbReference type="InterPro" id="IPR033659">
    <property type="entry name" value="Ferrochelatase_N"/>
</dbReference>
<dbReference type="NCBIfam" id="TIGR00109">
    <property type="entry name" value="hemH"/>
    <property type="match status" value="1"/>
</dbReference>
<dbReference type="PANTHER" id="PTHR11108">
    <property type="entry name" value="FERROCHELATASE"/>
    <property type="match status" value="1"/>
</dbReference>
<dbReference type="PANTHER" id="PTHR11108:SF1">
    <property type="entry name" value="FERROCHELATASE, MITOCHONDRIAL"/>
    <property type="match status" value="1"/>
</dbReference>
<dbReference type="Pfam" id="PF00762">
    <property type="entry name" value="Ferrochelatase"/>
    <property type="match status" value="1"/>
</dbReference>
<dbReference type="SUPFAM" id="SSF53800">
    <property type="entry name" value="Chelatase"/>
    <property type="match status" value="1"/>
</dbReference>
<dbReference type="PROSITE" id="PS00534">
    <property type="entry name" value="FERROCHELATASE"/>
    <property type="match status" value="1"/>
</dbReference>
<comment type="function">
    <text evidence="1">Catalyzes the ferrous insertion into protoporphyrin IX.</text>
</comment>
<comment type="catalytic activity">
    <reaction evidence="1">
        <text>heme b + 2 H(+) = protoporphyrin IX + Fe(2+)</text>
        <dbReference type="Rhea" id="RHEA:22584"/>
        <dbReference type="ChEBI" id="CHEBI:15378"/>
        <dbReference type="ChEBI" id="CHEBI:29033"/>
        <dbReference type="ChEBI" id="CHEBI:57306"/>
        <dbReference type="ChEBI" id="CHEBI:60344"/>
        <dbReference type="EC" id="4.98.1.1"/>
    </reaction>
</comment>
<comment type="pathway">
    <text evidence="1">Porphyrin-containing compound metabolism; protoheme biosynthesis; protoheme from protoporphyrin-IX: step 1/1.</text>
</comment>
<comment type="subcellular location">
    <subcellularLocation>
        <location evidence="1">Cytoplasm</location>
    </subcellularLocation>
</comment>
<comment type="similarity">
    <text evidence="1">Belongs to the ferrochelatase family.</text>
</comment>
<keyword id="KW-0963">Cytoplasm</keyword>
<keyword id="KW-0350">Heme biosynthesis</keyword>
<keyword id="KW-0408">Iron</keyword>
<keyword id="KW-0456">Lyase</keyword>
<keyword id="KW-0479">Metal-binding</keyword>
<keyword id="KW-0627">Porphyrin biosynthesis</keyword>
<keyword id="KW-1185">Reference proteome</keyword>
<organism>
    <name type="scientific">Rhodopseudomonas palustris (strain HaA2)</name>
    <dbReference type="NCBI Taxonomy" id="316058"/>
    <lineage>
        <taxon>Bacteria</taxon>
        <taxon>Pseudomonadati</taxon>
        <taxon>Pseudomonadota</taxon>
        <taxon>Alphaproteobacteria</taxon>
        <taxon>Hyphomicrobiales</taxon>
        <taxon>Nitrobacteraceae</taxon>
        <taxon>Rhodopseudomonas</taxon>
    </lineage>
</organism>
<feature type="chain" id="PRO_1000019360" description="Ferrochelatase">
    <location>
        <begin position="1"/>
        <end position="345"/>
    </location>
</feature>
<feature type="binding site" evidence="1">
    <location>
        <position position="215"/>
    </location>
    <ligand>
        <name>Fe cation</name>
        <dbReference type="ChEBI" id="CHEBI:24875"/>
    </ligand>
</feature>
<feature type="binding site" evidence="1">
    <location>
        <position position="296"/>
    </location>
    <ligand>
        <name>Fe cation</name>
        <dbReference type="ChEBI" id="CHEBI:24875"/>
    </ligand>
</feature>
<reference key="1">
    <citation type="submission" date="2006-01" db="EMBL/GenBank/DDBJ databases">
        <title>Complete sequence of Rhodopseudomonas palustris HaA2.</title>
        <authorList>
            <consortium name="US DOE Joint Genome Institute"/>
            <person name="Copeland A."/>
            <person name="Lucas S."/>
            <person name="Lapidus A."/>
            <person name="Barry K."/>
            <person name="Detter J.C."/>
            <person name="Glavina T."/>
            <person name="Hammon N."/>
            <person name="Israni S."/>
            <person name="Pitluck S."/>
            <person name="Chain P."/>
            <person name="Malfatti S."/>
            <person name="Shin M."/>
            <person name="Vergez L."/>
            <person name="Schmutz J."/>
            <person name="Larimer F."/>
            <person name="Land M."/>
            <person name="Hauser L."/>
            <person name="Pelletier D.A."/>
            <person name="Kyrpides N."/>
            <person name="Anderson I."/>
            <person name="Oda Y."/>
            <person name="Harwood C.S."/>
            <person name="Richardson P."/>
        </authorList>
    </citation>
    <scope>NUCLEOTIDE SEQUENCE [LARGE SCALE GENOMIC DNA]</scope>
    <source>
        <strain>HaA2</strain>
    </source>
</reference>
<accession>Q2IRD5</accession>
<gene>
    <name evidence="1" type="primary">hemH</name>
    <name type="ordered locus">RPB_4542</name>
</gene>
<proteinExistence type="inferred from homology"/>
<name>HEMH_RHOP2</name>
<evidence type="ECO:0000255" key="1">
    <source>
        <dbReference type="HAMAP-Rule" id="MF_00323"/>
    </source>
</evidence>
<sequence length="345" mass="38582">MTVIVPIHGPAPALAPAPERVGVLLVNLGTPDSCDTKGVRVYLREFLSDPRVIENQGIFWKLALNGIILNTRPARKAKDYQKIWNQEKNESPLKTITRAQAEKLAASLSDRSHLVVDWAMRYGNPSMRDRIEALVAQGCSRLLVVPLYPQYSAATSATVCDQAFRVLRELRAQPTLRVTPPYYRDDAYIDALANSIHAHLATLPFKPEMIVASFHGMPQAYIEKGDPYQSQCVATVDALRERMGLDDKKLLLTFQSRFGFDQWLQPYTDKTIEKLAKDGVRKLAVVMPGFAADCLETLEEIAQENAEIFMHNGGEEFSAIPCLNDSADGIAVIRQLVMRELEGWL</sequence>
<protein>
    <recommendedName>
        <fullName evidence="1">Ferrochelatase</fullName>
        <ecNumber evidence="1">4.98.1.1</ecNumber>
    </recommendedName>
    <alternativeName>
        <fullName evidence="1">Heme synthase</fullName>
    </alternativeName>
    <alternativeName>
        <fullName evidence="1">Protoheme ferro-lyase</fullName>
    </alternativeName>
</protein>